<sequence length="257" mass="28642">MAHSQVGIQLISESTEKTLAELTALCAEHNIIHHEKSPLALVQTDERLELRKLDEPKLGAVYVDFVGGTMAHRRKFGGGRGEAVAKAVGIKGSELPTVIDATAGLGRDAFVLASIGCQVRLVERHPVVFLLLQDGLNRAYQDEEIGEMLQQNLCLLNVHHINELDPNSDYADVVYLDPMYPHKQKSALVKKEMRVFQHLVGADLDADELLLPALQLAKKRVVVKRPDYAEFLCGKQPHFSRETKNHRFDIYMGASQC</sequence>
<reference key="1">
    <citation type="journal article" date="2007" name="Genome Biol.">
        <title>Characterization and modeling of the Haemophilus influenzae core and supragenomes based on the complete genomic sequences of Rd and 12 clinical nontypeable strains.</title>
        <authorList>
            <person name="Hogg J.S."/>
            <person name="Hu F.Z."/>
            <person name="Janto B."/>
            <person name="Boissy R."/>
            <person name="Hayes J."/>
            <person name="Keefe R."/>
            <person name="Post J.C."/>
            <person name="Ehrlich G.D."/>
        </authorList>
    </citation>
    <scope>NUCLEOTIDE SEQUENCE [LARGE SCALE GENOMIC DNA]</scope>
    <source>
        <strain>PittEE</strain>
    </source>
</reference>
<accession>A5UDM5</accession>
<organism>
    <name type="scientific">Haemophilus influenzae (strain PittEE)</name>
    <dbReference type="NCBI Taxonomy" id="374930"/>
    <lineage>
        <taxon>Bacteria</taxon>
        <taxon>Pseudomonadati</taxon>
        <taxon>Pseudomonadota</taxon>
        <taxon>Gammaproteobacteria</taxon>
        <taxon>Pasteurellales</taxon>
        <taxon>Pasteurellaceae</taxon>
        <taxon>Haemophilus</taxon>
    </lineage>
</organism>
<gene>
    <name evidence="1" type="primary">rsmJ</name>
    <name type="ordered locus">CGSHiEE_07805</name>
</gene>
<dbReference type="EC" id="2.1.1.242" evidence="1"/>
<dbReference type="EMBL" id="CP000671">
    <property type="protein sequence ID" value="ABQ98876.1"/>
    <property type="molecule type" value="Genomic_DNA"/>
</dbReference>
<dbReference type="SMR" id="A5UDM5"/>
<dbReference type="KEGG" id="hip:CGSHiEE_07805"/>
<dbReference type="HOGENOM" id="CLU_076324_0_0_6"/>
<dbReference type="GO" id="GO:0005737">
    <property type="term" value="C:cytoplasm"/>
    <property type="evidence" value="ECO:0007669"/>
    <property type="project" value="UniProtKB-SubCell"/>
</dbReference>
<dbReference type="GO" id="GO:0008990">
    <property type="term" value="F:rRNA (guanine-N2-)-methyltransferase activity"/>
    <property type="evidence" value="ECO:0007669"/>
    <property type="project" value="UniProtKB-UniRule"/>
</dbReference>
<dbReference type="Gene3D" id="3.40.50.150">
    <property type="entry name" value="Vaccinia Virus protein VP39"/>
    <property type="match status" value="1"/>
</dbReference>
<dbReference type="Gene3D" id="3.40.1630.10">
    <property type="entry name" value="YhiQ-like domain"/>
    <property type="match status" value="1"/>
</dbReference>
<dbReference type="HAMAP" id="MF_01523">
    <property type="entry name" value="16SrRNA_methyltr_J"/>
    <property type="match status" value="1"/>
</dbReference>
<dbReference type="InterPro" id="IPR007536">
    <property type="entry name" value="16SrRNA_methylTrfase_J"/>
</dbReference>
<dbReference type="InterPro" id="IPR029063">
    <property type="entry name" value="SAM-dependent_MTases_sf"/>
</dbReference>
<dbReference type="PANTHER" id="PTHR36112">
    <property type="entry name" value="RIBOSOMAL RNA SMALL SUBUNIT METHYLTRANSFERASE J"/>
    <property type="match status" value="1"/>
</dbReference>
<dbReference type="PANTHER" id="PTHR36112:SF1">
    <property type="entry name" value="RIBOSOMAL RNA SMALL SUBUNIT METHYLTRANSFERASE J"/>
    <property type="match status" value="1"/>
</dbReference>
<dbReference type="Pfam" id="PF04445">
    <property type="entry name" value="SAM_MT"/>
    <property type="match status" value="1"/>
</dbReference>
<dbReference type="SUPFAM" id="SSF53335">
    <property type="entry name" value="S-adenosyl-L-methionine-dependent methyltransferases"/>
    <property type="match status" value="1"/>
</dbReference>
<evidence type="ECO:0000255" key="1">
    <source>
        <dbReference type="HAMAP-Rule" id="MF_01523"/>
    </source>
</evidence>
<feature type="chain" id="PRO_0000316255" description="Ribosomal RNA small subunit methyltransferase J">
    <location>
        <begin position="1"/>
        <end position="257"/>
    </location>
</feature>
<feature type="binding site" evidence="1">
    <location>
        <begin position="107"/>
        <end position="108"/>
    </location>
    <ligand>
        <name>S-adenosyl-L-methionine</name>
        <dbReference type="ChEBI" id="CHEBI:59789"/>
    </ligand>
</feature>
<feature type="binding site" evidence="1">
    <location>
        <begin position="123"/>
        <end position="124"/>
    </location>
    <ligand>
        <name>S-adenosyl-L-methionine</name>
        <dbReference type="ChEBI" id="CHEBI:59789"/>
    </ligand>
</feature>
<feature type="binding site" evidence="1">
    <location>
        <position position="177"/>
    </location>
    <ligand>
        <name>S-adenosyl-L-methionine</name>
        <dbReference type="ChEBI" id="CHEBI:59789"/>
    </ligand>
</feature>
<name>RSMJ_HAEIE</name>
<proteinExistence type="inferred from homology"/>
<comment type="function">
    <text evidence="1">Specifically methylates the guanosine in position 1516 of 16S rRNA.</text>
</comment>
<comment type="catalytic activity">
    <reaction evidence="1">
        <text>guanosine(1516) in 16S rRNA + S-adenosyl-L-methionine = N(2)-methylguanosine(1516) in 16S rRNA + S-adenosyl-L-homocysteine + H(+)</text>
        <dbReference type="Rhea" id="RHEA:43220"/>
        <dbReference type="Rhea" id="RHEA-COMP:10412"/>
        <dbReference type="Rhea" id="RHEA-COMP:10413"/>
        <dbReference type="ChEBI" id="CHEBI:15378"/>
        <dbReference type="ChEBI" id="CHEBI:57856"/>
        <dbReference type="ChEBI" id="CHEBI:59789"/>
        <dbReference type="ChEBI" id="CHEBI:74269"/>
        <dbReference type="ChEBI" id="CHEBI:74481"/>
        <dbReference type="EC" id="2.1.1.242"/>
    </reaction>
</comment>
<comment type="subcellular location">
    <subcellularLocation>
        <location evidence="1">Cytoplasm</location>
    </subcellularLocation>
</comment>
<comment type="similarity">
    <text evidence="1">Belongs to the methyltransferase superfamily. RsmJ family.</text>
</comment>
<protein>
    <recommendedName>
        <fullName evidence="1">Ribosomal RNA small subunit methyltransferase J</fullName>
        <ecNumber evidence="1">2.1.1.242</ecNumber>
    </recommendedName>
    <alternativeName>
        <fullName evidence="1">16S rRNA m2G1516 methyltransferase</fullName>
    </alternativeName>
    <alternativeName>
        <fullName evidence="1">rRNA (guanine-N(2)-)-methyltransferase</fullName>
    </alternativeName>
</protein>
<keyword id="KW-0963">Cytoplasm</keyword>
<keyword id="KW-0489">Methyltransferase</keyword>
<keyword id="KW-0698">rRNA processing</keyword>
<keyword id="KW-0949">S-adenosyl-L-methionine</keyword>
<keyword id="KW-0808">Transferase</keyword>